<keyword id="KW-0002">3D-structure</keyword>
<keyword id="KW-0028">Amino-acid biosynthesis</keyword>
<keyword id="KW-0057">Aromatic amino acid biosynthesis</keyword>
<keyword id="KW-0328">Glycosyltransferase</keyword>
<keyword id="KW-0460">Magnesium</keyword>
<keyword id="KW-0479">Metal-binding</keyword>
<keyword id="KW-1185">Reference proteome</keyword>
<keyword id="KW-0808">Transferase</keyword>
<keyword id="KW-0822">Tryptophan biosynthesis</keyword>
<organism>
    <name type="scientific">Nostoc sp. (strain PCC 7120 / SAG 25.82 / UTEX 2576)</name>
    <dbReference type="NCBI Taxonomy" id="103690"/>
    <lineage>
        <taxon>Bacteria</taxon>
        <taxon>Bacillati</taxon>
        <taxon>Cyanobacteriota</taxon>
        <taxon>Cyanophyceae</taxon>
        <taxon>Nostocales</taxon>
        <taxon>Nostocaceae</taxon>
        <taxon>Nostoc</taxon>
    </lineage>
</organism>
<feature type="chain" id="PRO_0000154420" description="Anthranilate phosphoribosyltransferase 2">
    <location>
        <begin position="1"/>
        <end position="362"/>
    </location>
</feature>
<feature type="binding site" evidence="1">
    <location>
        <position position="103"/>
    </location>
    <ligand>
        <name>5-phospho-alpha-D-ribose 1-diphosphate</name>
        <dbReference type="ChEBI" id="CHEBI:58017"/>
    </ligand>
</feature>
<feature type="binding site" evidence="1">
    <location>
        <position position="103"/>
    </location>
    <ligand>
        <name>anthranilate</name>
        <dbReference type="ChEBI" id="CHEBI:16567"/>
        <label>1</label>
    </ligand>
</feature>
<feature type="binding site" evidence="1">
    <location>
        <begin position="106"/>
        <end position="107"/>
    </location>
    <ligand>
        <name>5-phospho-alpha-D-ribose 1-diphosphate</name>
        <dbReference type="ChEBI" id="CHEBI:58017"/>
    </ligand>
</feature>
<feature type="binding site" evidence="1">
    <location>
        <position position="111"/>
    </location>
    <ligand>
        <name>5-phospho-alpha-D-ribose 1-diphosphate</name>
        <dbReference type="ChEBI" id="CHEBI:58017"/>
    </ligand>
</feature>
<feature type="binding site" evidence="1">
    <location>
        <begin position="113"/>
        <end position="116"/>
    </location>
    <ligand>
        <name>5-phospho-alpha-D-ribose 1-diphosphate</name>
        <dbReference type="ChEBI" id="CHEBI:58017"/>
    </ligand>
</feature>
<feature type="binding site" evidence="1">
    <location>
        <position position="115"/>
    </location>
    <ligand>
        <name>Mg(2+)</name>
        <dbReference type="ChEBI" id="CHEBI:18420"/>
        <label>1</label>
    </ligand>
</feature>
<feature type="binding site" evidence="1">
    <location>
        <begin position="131"/>
        <end position="139"/>
    </location>
    <ligand>
        <name>5-phospho-alpha-D-ribose 1-diphosphate</name>
        <dbReference type="ChEBI" id="CHEBI:58017"/>
    </ligand>
</feature>
<feature type="binding site" evidence="1">
    <location>
        <position position="134"/>
    </location>
    <ligand>
        <name>anthranilate</name>
        <dbReference type="ChEBI" id="CHEBI:16567"/>
        <label>1</label>
    </ligand>
</feature>
<feature type="binding site" evidence="1">
    <location>
        <position position="143"/>
    </location>
    <ligand>
        <name>5-phospho-alpha-D-ribose 1-diphosphate</name>
        <dbReference type="ChEBI" id="CHEBI:58017"/>
    </ligand>
</feature>
<feature type="binding site" evidence="1">
    <location>
        <position position="189"/>
    </location>
    <ligand>
        <name>anthranilate</name>
        <dbReference type="ChEBI" id="CHEBI:16567"/>
        <label>2</label>
    </ligand>
</feature>
<feature type="binding site" evidence="1">
    <location>
        <position position="248"/>
    </location>
    <ligand>
        <name>Mg(2+)</name>
        <dbReference type="ChEBI" id="CHEBI:18420"/>
        <label>2</label>
    </ligand>
</feature>
<feature type="binding site" evidence="1">
    <location>
        <position position="249"/>
    </location>
    <ligand>
        <name>Mg(2+)</name>
        <dbReference type="ChEBI" id="CHEBI:18420"/>
        <label>1</label>
    </ligand>
</feature>
<feature type="binding site" evidence="1">
    <location>
        <position position="249"/>
    </location>
    <ligand>
        <name>Mg(2+)</name>
        <dbReference type="ChEBI" id="CHEBI:18420"/>
        <label>2</label>
    </ligand>
</feature>
<feature type="helix" evidence="3">
    <location>
        <begin position="16"/>
        <end position="23"/>
    </location>
</feature>
<feature type="helix" evidence="3">
    <location>
        <begin position="30"/>
        <end position="41"/>
    </location>
</feature>
<feature type="helix" evidence="3">
    <location>
        <begin position="47"/>
        <end position="60"/>
    </location>
</feature>
<feature type="helix" evidence="3">
    <location>
        <begin position="64"/>
        <end position="75"/>
    </location>
</feature>
<feature type="strand" evidence="3">
    <location>
        <begin position="94"/>
        <end position="96"/>
    </location>
</feature>
<feature type="strand" evidence="3">
    <location>
        <begin position="99"/>
        <end position="103"/>
    </location>
</feature>
<feature type="helix" evidence="3">
    <location>
        <begin position="114"/>
        <end position="124"/>
    </location>
</feature>
<feature type="strand" evidence="3">
    <location>
        <begin position="129"/>
        <end position="134"/>
    </location>
</feature>
<feature type="helix" evidence="3">
    <location>
        <begin position="143"/>
        <end position="149"/>
    </location>
</feature>
<feature type="helix" evidence="3">
    <location>
        <begin position="158"/>
        <end position="167"/>
    </location>
</feature>
<feature type="strand" evidence="3">
    <location>
        <begin position="169"/>
        <end position="175"/>
    </location>
</feature>
<feature type="helix" evidence="3">
    <location>
        <begin position="180"/>
        <end position="185"/>
    </location>
</feature>
<feature type="helix" evidence="3">
    <location>
        <begin position="186"/>
        <end position="192"/>
    </location>
</feature>
<feature type="helix" evidence="3">
    <location>
        <begin position="197"/>
        <end position="201"/>
    </location>
</feature>
<feature type="helix" evidence="3">
    <location>
        <begin position="202"/>
        <end position="204"/>
    </location>
</feature>
<feature type="strand" evidence="3">
    <location>
        <begin position="211"/>
        <end position="216"/>
    </location>
</feature>
<feature type="helix" evidence="3">
    <location>
        <begin position="220"/>
        <end position="222"/>
    </location>
</feature>
<feature type="helix" evidence="3">
    <location>
        <begin position="223"/>
        <end position="232"/>
    </location>
</feature>
<feature type="strand" evidence="3">
    <location>
        <begin position="236"/>
        <end position="243"/>
    </location>
</feature>
<feature type="turn" evidence="3">
    <location>
        <begin position="244"/>
        <end position="246"/>
    </location>
</feature>
<feature type="strand" evidence="3">
    <location>
        <begin position="247"/>
        <end position="249"/>
    </location>
</feature>
<feature type="strand" evidence="3">
    <location>
        <begin position="252"/>
        <end position="254"/>
    </location>
</feature>
<feature type="strand" evidence="3">
    <location>
        <begin position="256"/>
        <end position="262"/>
    </location>
</feature>
<feature type="strand" evidence="3">
    <location>
        <begin position="265"/>
        <end position="271"/>
    </location>
</feature>
<feature type="helix" evidence="3">
    <location>
        <begin position="273"/>
        <end position="276"/>
    </location>
</feature>
<feature type="helix" evidence="3">
    <location>
        <begin position="283"/>
        <end position="286"/>
    </location>
</feature>
<feature type="helix" evidence="3">
    <location>
        <begin position="291"/>
        <end position="302"/>
    </location>
</feature>
<feature type="helix" evidence="3">
    <location>
        <begin position="308"/>
        <end position="324"/>
    </location>
</feature>
<feature type="helix" evidence="3">
    <location>
        <begin position="333"/>
        <end position="346"/>
    </location>
</feature>
<feature type="helix" evidence="3">
    <location>
        <begin position="348"/>
        <end position="361"/>
    </location>
</feature>
<dbReference type="EC" id="2.4.2.18" evidence="1"/>
<dbReference type="EMBL" id="BA000019">
    <property type="protein sequence ID" value="BAB73110.1"/>
    <property type="molecule type" value="Genomic_DNA"/>
</dbReference>
<dbReference type="PIR" id="AF1950">
    <property type="entry name" value="AF1950"/>
</dbReference>
<dbReference type="PDB" id="1VQU">
    <property type="method" value="X-ray"/>
    <property type="resolution" value="1.85 A"/>
    <property type="chains" value="A/B=1-362"/>
</dbReference>
<dbReference type="PDBsum" id="1VQU"/>
<dbReference type="SMR" id="Q8YXQ9"/>
<dbReference type="STRING" id="103690.gene:10493167"/>
<dbReference type="KEGG" id="ana:alr1153"/>
<dbReference type="eggNOG" id="COG0547">
    <property type="taxonomic scope" value="Bacteria"/>
</dbReference>
<dbReference type="OrthoDB" id="9806430at2"/>
<dbReference type="UniPathway" id="UPA00035">
    <property type="reaction ID" value="UER00041"/>
</dbReference>
<dbReference type="EvolutionaryTrace" id="Q8YXQ9"/>
<dbReference type="Proteomes" id="UP000002483">
    <property type="component" value="Chromosome"/>
</dbReference>
<dbReference type="GO" id="GO:0005829">
    <property type="term" value="C:cytosol"/>
    <property type="evidence" value="ECO:0007669"/>
    <property type="project" value="TreeGrafter"/>
</dbReference>
<dbReference type="GO" id="GO:0004048">
    <property type="term" value="F:anthranilate phosphoribosyltransferase activity"/>
    <property type="evidence" value="ECO:0007669"/>
    <property type="project" value="UniProtKB-UniRule"/>
</dbReference>
<dbReference type="GO" id="GO:0000287">
    <property type="term" value="F:magnesium ion binding"/>
    <property type="evidence" value="ECO:0007669"/>
    <property type="project" value="UniProtKB-UniRule"/>
</dbReference>
<dbReference type="GO" id="GO:0000162">
    <property type="term" value="P:L-tryptophan biosynthetic process"/>
    <property type="evidence" value="ECO:0007669"/>
    <property type="project" value="UniProtKB-UniRule"/>
</dbReference>
<dbReference type="FunFam" id="3.40.1030.10:FF:000002">
    <property type="entry name" value="Anthranilate phosphoribosyltransferase"/>
    <property type="match status" value="1"/>
</dbReference>
<dbReference type="Gene3D" id="3.40.1030.10">
    <property type="entry name" value="Nucleoside phosphorylase/phosphoribosyltransferase catalytic domain"/>
    <property type="match status" value="1"/>
</dbReference>
<dbReference type="Gene3D" id="1.20.970.10">
    <property type="entry name" value="Transferase, Pyrimidine Nucleoside Phosphorylase, Chain C"/>
    <property type="match status" value="1"/>
</dbReference>
<dbReference type="HAMAP" id="MF_00211">
    <property type="entry name" value="TrpD"/>
    <property type="match status" value="1"/>
</dbReference>
<dbReference type="InterPro" id="IPR005940">
    <property type="entry name" value="Anthranilate_Pribosyl_Tfrase"/>
</dbReference>
<dbReference type="InterPro" id="IPR000312">
    <property type="entry name" value="Glycosyl_Trfase_fam3"/>
</dbReference>
<dbReference type="InterPro" id="IPR017459">
    <property type="entry name" value="Glycosyl_Trfase_fam3_N_dom"/>
</dbReference>
<dbReference type="InterPro" id="IPR036320">
    <property type="entry name" value="Glycosyl_Trfase_fam3_N_dom_sf"/>
</dbReference>
<dbReference type="InterPro" id="IPR035902">
    <property type="entry name" value="Nuc_phospho_transferase"/>
</dbReference>
<dbReference type="NCBIfam" id="TIGR01245">
    <property type="entry name" value="trpD"/>
    <property type="match status" value="1"/>
</dbReference>
<dbReference type="PANTHER" id="PTHR43285">
    <property type="entry name" value="ANTHRANILATE PHOSPHORIBOSYLTRANSFERASE"/>
    <property type="match status" value="1"/>
</dbReference>
<dbReference type="PANTHER" id="PTHR43285:SF2">
    <property type="entry name" value="ANTHRANILATE PHOSPHORIBOSYLTRANSFERASE"/>
    <property type="match status" value="1"/>
</dbReference>
<dbReference type="Pfam" id="PF02885">
    <property type="entry name" value="Glycos_trans_3N"/>
    <property type="match status" value="1"/>
</dbReference>
<dbReference type="Pfam" id="PF00591">
    <property type="entry name" value="Glycos_transf_3"/>
    <property type="match status" value="1"/>
</dbReference>
<dbReference type="SUPFAM" id="SSF52418">
    <property type="entry name" value="Nucleoside phosphorylase/phosphoribosyltransferase catalytic domain"/>
    <property type="match status" value="1"/>
</dbReference>
<dbReference type="SUPFAM" id="SSF47648">
    <property type="entry name" value="Nucleoside phosphorylase/phosphoribosyltransferase N-terminal domain"/>
    <property type="match status" value="1"/>
</dbReference>
<sequence>MTSSPTSTQESSTSWYLLLQQLIDGESLSRSQAAELMQGWLSEAVPPELSGAILTALNFKGVSADELTGMAEVLQSQSKMGTGENYSQLPITNSPFSIIDTCGTGGDGSSTFNISTAVAFVAAAYGVPVAKHGNRSASSLTGSADVLEALGVNLGASPEKVQAALQEVGITFLFAPGWHPALKAVATLRRTLRIRTVFNLLGPLVNPLRPTGQVVGLFTPKLLTTVAQALDNLGKQKAIVLHGRERLDEAGLGDLTDLAVLSDGELQLTTINPQEVGVTPAPIGALRGGDVQENAEILKAVLQGKGTQAQQDAVALNAALALQVAGAVPLLDHAQGVSVAKEILQTGTAWAKLAQLVYFLGN</sequence>
<reference key="1">
    <citation type="journal article" date="2001" name="DNA Res.">
        <title>Complete genomic sequence of the filamentous nitrogen-fixing cyanobacterium Anabaena sp. strain PCC 7120.</title>
        <authorList>
            <person name="Kaneko T."/>
            <person name="Nakamura Y."/>
            <person name="Wolk C.P."/>
            <person name="Kuritz T."/>
            <person name="Sasamoto S."/>
            <person name="Watanabe A."/>
            <person name="Iriguchi M."/>
            <person name="Ishikawa A."/>
            <person name="Kawashima K."/>
            <person name="Kimura T."/>
            <person name="Kishida Y."/>
            <person name="Kohara M."/>
            <person name="Matsumoto M."/>
            <person name="Matsuno A."/>
            <person name="Muraki A."/>
            <person name="Nakazaki N."/>
            <person name="Shimpo S."/>
            <person name="Sugimoto M."/>
            <person name="Takazawa M."/>
            <person name="Yamada M."/>
            <person name="Yasuda M."/>
            <person name="Tabata S."/>
        </authorList>
    </citation>
    <scope>NUCLEOTIDE SEQUENCE [LARGE SCALE GENOMIC DNA]</scope>
    <source>
        <strain>PCC 7120 / SAG 25.82 / UTEX 2576</strain>
    </source>
</reference>
<reference key="2">
    <citation type="submission" date="2011-07" db="PDB data bank">
        <title>Crystal structure of anthranilate phosphoribosyltransferase 2 (17130499) from Nostoc sp. at 1.85 A resolution.</title>
        <authorList>
            <consortium name="Joint center for structural genomics (JCSG)"/>
        </authorList>
    </citation>
    <scope>X-RAY CRYSTALLOGRAPHY (1.85 ANGSTROMS)</scope>
    <scope>SUBUNIT</scope>
</reference>
<evidence type="ECO:0000255" key="1">
    <source>
        <dbReference type="HAMAP-Rule" id="MF_00211"/>
    </source>
</evidence>
<evidence type="ECO:0000269" key="2">
    <source ref="2"/>
</evidence>
<evidence type="ECO:0007829" key="3">
    <source>
        <dbReference type="PDB" id="1VQU"/>
    </source>
</evidence>
<gene>
    <name evidence="1" type="primary">trpD2</name>
    <name type="ordered locus">alr1153</name>
</gene>
<protein>
    <recommendedName>
        <fullName evidence="1">Anthranilate phosphoribosyltransferase 2</fullName>
        <ecNumber evidence="1">2.4.2.18</ecNumber>
    </recommendedName>
</protein>
<comment type="function">
    <text evidence="1">Catalyzes the transfer of the phosphoribosyl group of 5-phosphorylribose-1-pyrophosphate (PRPP) to anthranilate to yield N-(5'-phosphoribosyl)-anthranilate (PRA).</text>
</comment>
<comment type="catalytic activity">
    <reaction evidence="1">
        <text>N-(5-phospho-beta-D-ribosyl)anthranilate + diphosphate = 5-phospho-alpha-D-ribose 1-diphosphate + anthranilate</text>
        <dbReference type="Rhea" id="RHEA:11768"/>
        <dbReference type="ChEBI" id="CHEBI:16567"/>
        <dbReference type="ChEBI" id="CHEBI:18277"/>
        <dbReference type="ChEBI" id="CHEBI:33019"/>
        <dbReference type="ChEBI" id="CHEBI:58017"/>
        <dbReference type="EC" id="2.4.2.18"/>
    </reaction>
</comment>
<comment type="cofactor">
    <cofactor evidence="1">
        <name>Mg(2+)</name>
        <dbReference type="ChEBI" id="CHEBI:18420"/>
    </cofactor>
    <text evidence="1">Binds 2 magnesium ions per monomer.</text>
</comment>
<comment type="pathway">
    <text evidence="1">Amino-acid biosynthesis; L-tryptophan biosynthesis; L-tryptophan from chorismate: step 2/5.</text>
</comment>
<comment type="subunit">
    <text evidence="1 2">Homodimer.</text>
</comment>
<comment type="similarity">
    <text evidence="1">Belongs to the anthranilate phosphoribosyltransferase family.</text>
</comment>
<accession>Q8YXQ9</accession>
<name>TRPD2_NOSS1</name>
<proteinExistence type="evidence at protein level"/>